<protein>
    <recommendedName>
        <fullName evidence="1">DNA replication and repair protein RecF</fullName>
    </recommendedName>
</protein>
<evidence type="ECO:0000255" key="1">
    <source>
        <dbReference type="HAMAP-Rule" id="MF_00365"/>
    </source>
</evidence>
<feature type="chain" id="PRO_1000079580" description="DNA replication and repair protein RecF">
    <location>
        <begin position="1"/>
        <end position="373"/>
    </location>
</feature>
<feature type="binding site" evidence="1">
    <location>
        <begin position="30"/>
        <end position="37"/>
    </location>
    <ligand>
        <name>ATP</name>
        <dbReference type="ChEBI" id="CHEBI:30616"/>
    </ligand>
</feature>
<proteinExistence type="inferred from homology"/>
<dbReference type="EMBL" id="CP000764">
    <property type="protein sequence ID" value="ABS20380.1"/>
    <property type="molecule type" value="Genomic_DNA"/>
</dbReference>
<dbReference type="RefSeq" id="WP_011983151.1">
    <property type="nucleotide sequence ID" value="NC_009674.1"/>
</dbReference>
<dbReference type="SMR" id="A7GJS2"/>
<dbReference type="STRING" id="315749.Bcer98_0004"/>
<dbReference type="GeneID" id="33895297"/>
<dbReference type="KEGG" id="bcy:Bcer98_0004"/>
<dbReference type="eggNOG" id="COG1195">
    <property type="taxonomic scope" value="Bacteria"/>
</dbReference>
<dbReference type="HOGENOM" id="CLU_040267_0_1_9"/>
<dbReference type="OrthoDB" id="9803889at2"/>
<dbReference type="Proteomes" id="UP000002300">
    <property type="component" value="Chromosome"/>
</dbReference>
<dbReference type="GO" id="GO:0005737">
    <property type="term" value="C:cytoplasm"/>
    <property type="evidence" value="ECO:0007669"/>
    <property type="project" value="UniProtKB-SubCell"/>
</dbReference>
<dbReference type="GO" id="GO:0005524">
    <property type="term" value="F:ATP binding"/>
    <property type="evidence" value="ECO:0007669"/>
    <property type="project" value="UniProtKB-UniRule"/>
</dbReference>
<dbReference type="GO" id="GO:0003697">
    <property type="term" value="F:single-stranded DNA binding"/>
    <property type="evidence" value="ECO:0007669"/>
    <property type="project" value="UniProtKB-UniRule"/>
</dbReference>
<dbReference type="GO" id="GO:0006260">
    <property type="term" value="P:DNA replication"/>
    <property type="evidence" value="ECO:0007669"/>
    <property type="project" value="UniProtKB-UniRule"/>
</dbReference>
<dbReference type="GO" id="GO:0000731">
    <property type="term" value="P:DNA synthesis involved in DNA repair"/>
    <property type="evidence" value="ECO:0007669"/>
    <property type="project" value="TreeGrafter"/>
</dbReference>
<dbReference type="GO" id="GO:0006302">
    <property type="term" value="P:double-strand break repair"/>
    <property type="evidence" value="ECO:0007669"/>
    <property type="project" value="TreeGrafter"/>
</dbReference>
<dbReference type="GO" id="GO:0009432">
    <property type="term" value="P:SOS response"/>
    <property type="evidence" value="ECO:0007669"/>
    <property type="project" value="UniProtKB-UniRule"/>
</dbReference>
<dbReference type="CDD" id="cd03242">
    <property type="entry name" value="ABC_RecF"/>
    <property type="match status" value="1"/>
</dbReference>
<dbReference type="FunFam" id="1.20.1050.90:FF:000002">
    <property type="entry name" value="DNA replication and repair protein RecF"/>
    <property type="match status" value="1"/>
</dbReference>
<dbReference type="FunFam" id="3.40.50.300:FF:000400">
    <property type="entry name" value="DNA replication and repair protein RecF"/>
    <property type="match status" value="1"/>
</dbReference>
<dbReference type="Gene3D" id="3.40.50.300">
    <property type="entry name" value="P-loop containing nucleotide triphosphate hydrolases"/>
    <property type="match status" value="1"/>
</dbReference>
<dbReference type="Gene3D" id="1.20.1050.90">
    <property type="entry name" value="RecF/RecN/SMC, N-terminal domain"/>
    <property type="match status" value="1"/>
</dbReference>
<dbReference type="HAMAP" id="MF_00365">
    <property type="entry name" value="RecF"/>
    <property type="match status" value="1"/>
</dbReference>
<dbReference type="InterPro" id="IPR001238">
    <property type="entry name" value="DNA-binding_RecF"/>
</dbReference>
<dbReference type="InterPro" id="IPR018078">
    <property type="entry name" value="DNA-binding_RecF_CS"/>
</dbReference>
<dbReference type="InterPro" id="IPR027417">
    <property type="entry name" value="P-loop_NTPase"/>
</dbReference>
<dbReference type="InterPro" id="IPR003395">
    <property type="entry name" value="RecF/RecN/SMC_N"/>
</dbReference>
<dbReference type="InterPro" id="IPR042174">
    <property type="entry name" value="RecF_2"/>
</dbReference>
<dbReference type="NCBIfam" id="TIGR00611">
    <property type="entry name" value="recf"/>
    <property type="match status" value="1"/>
</dbReference>
<dbReference type="PANTHER" id="PTHR32182">
    <property type="entry name" value="DNA REPLICATION AND REPAIR PROTEIN RECF"/>
    <property type="match status" value="1"/>
</dbReference>
<dbReference type="PANTHER" id="PTHR32182:SF0">
    <property type="entry name" value="DNA REPLICATION AND REPAIR PROTEIN RECF"/>
    <property type="match status" value="1"/>
</dbReference>
<dbReference type="Pfam" id="PF02463">
    <property type="entry name" value="SMC_N"/>
    <property type="match status" value="1"/>
</dbReference>
<dbReference type="SUPFAM" id="SSF52540">
    <property type="entry name" value="P-loop containing nucleoside triphosphate hydrolases"/>
    <property type="match status" value="1"/>
</dbReference>
<dbReference type="PROSITE" id="PS00617">
    <property type="entry name" value="RECF_1"/>
    <property type="match status" value="1"/>
</dbReference>
<dbReference type="PROSITE" id="PS00618">
    <property type="entry name" value="RECF_2"/>
    <property type="match status" value="1"/>
</dbReference>
<accession>A7GJS2</accession>
<sequence length="373" mass="43134">MFISEIQLKNYRNYEDLNLSFEDKVNVIIGENAQGKTNLMEAIYVLAMAKSHRTSNDRELIRWDEDYGKIKGRLQKRNSSVSLELNISKKGKKAKLNELEQQKLSQYIGEMNVVMFAPEDLNLVKGSPQVRRRFLDMELGQIAPVYLYELSQYQKVLTQRNHLLKAMQGKNEETMLDVFTLQLIEHGTKILQKRFEFLHLLQEWAAPIHRGISRGLEELEIVYKPSVDVSESMDLSKIKEVYYESFQSVKQREIFRGTTLIGPHRDDLQFFVNSKNVQVFGSQGQQRTTALSLKLAEIELIYAEVKEYPILLLDDVLSELDDYRQSHLLNTIQGKVQTFVTTTSVDGIEHETLKKAKTIHVKSGTVDCEIDRI</sequence>
<organism>
    <name type="scientific">Bacillus cytotoxicus (strain DSM 22905 / CIP 110041 / 391-98 / NVH 391-98)</name>
    <dbReference type="NCBI Taxonomy" id="315749"/>
    <lineage>
        <taxon>Bacteria</taxon>
        <taxon>Bacillati</taxon>
        <taxon>Bacillota</taxon>
        <taxon>Bacilli</taxon>
        <taxon>Bacillales</taxon>
        <taxon>Bacillaceae</taxon>
        <taxon>Bacillus</taxon>
        <taxon>Bacillus cereus group</taxon>
    </lineage>
</organism>
<name>RECF_BACCN</name>
<comment type="function">
    <text evidence="1">The RecF protein is involved in DNA metabolism; it is required for DNA replication and normal SOS inducibility. RecF binds preferentially to single-stranded, linear DNA. It also seems to bind ATP.</text>
</comment>
<comment type="subcellular location">
    <subcellularLocation>
        <location evidence="1">Cytoplasm</location>
    </subcellularLocation>
</comment>
<comment type="similarity">
    <text evidence="1">Belongs to the RecF family.</text>
</comment>
<keyword id="KW-0067">ATP-binding</keyword>
<keyword id="KW-0963">Cytoplasm</keyword>
<keyword id="KW-0227">DNA damage</keyword>
<keyword id="KW-0234">DNA repair</keyword>
<keyword id="KW-0235">DNA replication</keyword>
<keyword id="KW-0238">DNA-binding</keyword>
<keyword id="KW-0547">Nucleotide-binding</keyword>
<keyword id="KW-0742">SOS response</keyword>
<reference key="1">
    <citation type="journal article" date="2008" name="Chem. Biol. Interact.">
        <title>Extending the Bacillus cereus group genomics to putative food-borne pathogens of different toxicity.</title>
        <authorList>
            <person name="Lapidus A."/>
            <person name="Goltsman E."/>
            <person name="Auger S."/>
            <person name="Galleron N."/>
            <person name="Segurens B."/>
            <person name="Dossat C."/>
            <person name="Land M.L."/>
            <person name="Broussolle V."/>
            <person name="Brillard J."/>
            <person name="Guinebretiere M.-H."/>
            <person name="Sanchis V."/>
            <person name="Nguen-the C."/>
            <person name="Lereclus D."/>
            <person name="Richardson P."/>
            <person name="Wincker P."/>
            <person name="Weissenbach J."/>
            <person name="Ehrlich S.D."/>
            <person name="Sorokin A."/>
        </authorList>
    </citation>
    <scope>NUCLEOTIDE SEQUENCE [LARGE SCALE GENOMIC DNA]</scope>
    <source>
        <strain>DSM 22905 / CIP 110041 / 391-98 / NVH 391-98</strain>
    </source>
</reference>
<gene>
    <name evidence="1" type="primary">recF</name>
    <name type="ordered locus">Bcer98_0004</name>
</gene>